<comment type="function">
    <text evidence="1">Participates in the translocation of lipoproteins from the inner membrane to the outer membrane. Only forms a complex with a lipoprotein if the residue after the N-terminal Cys is not an aspartate (The Asp acts as a targeting signal to indicate that the lipoprotein should stay in the inner membrane).</text>
</comment>
<comment type="subunit">
    <text evidence="1">Monomer.</text>
</comment>
<comment type="subcellular location">
    <subcellularLocation>
        <location evidence="1">Periplasm</location>
    </subcellularLocation>
</comment>
<comment type="similarity">
    <text evidence="1">Belongs to the LolA family.</text>
</comment>
<feature type="signal peptide" evidence="1">
    <location>
        <begin position="1"/>
        <end position="17"/>
    </location>
</feature>
<feature type="chain" id="PRO_5000406110" description="Outer-membrane lipoprotein carrier protein">
    <location>
        <begin position="18"/>
        <end position="198"/>
    </location>
</feature>
<gene>
    <name evidence="1" type="primary">lolA</name>
    <name type="ordered locus">VSAL_I1842</name>
</gene>
<sequence length="198" mass="22175">MKKILLSLCFLSSVAFASPQGELTDRLNQNKGFEASFTQKVLSPEGDVLMQGEGDVKILRPNLFRWHTQTPDENLLVTDGKTLWYYNPFVEQVTLMGLDQATTQTPFVLLTRNKASDWDNYSVAQNGDAFTVSPKSDSAIKSEFIVRIQPSGKVTGFSVVEQDGQRSDFNFTTFEAKKPAQSNFMFTVPDGVDIDDQR</sequence>
<protein>
    <recommendedName>
        <fullName evidence="1">Outer-membrane lipoprotein carrier protein</fullName>
    </recommendedName>
</protein>
<dbReference type="EMBL" id="FM178379">
    <property type="protein sequence ID" value="CAQ79527.1"/>
    <property type="molecule type" value="Genomic_DNA"/>
</dbReference>
<dbReference type="RefSeq" id="WP_012550417.1">
    <property type="nucleotide sequence ID" value="NC_011312.1"/>
</dbReference>
<dbReference type="SMR" id="B6ENN3"/>
<dbReference type="KEGG" id="vsa:VSAL_I1842"/>
<dbReference type="eggNOG" id="COG2834">
    <property type="taxonomic scope" value="Bacteria"/>
</dbReference>
<dbReference type="HOGENOM" id="CLU_087560_1_1_6"/>
<dbReference type="Proteomes" id="UP000001730">
    <property type="component" value="Chromosome 1"/>
</dbReference>
<dbReference type="GO" id="GO:0030288">
    <property type="term" value="C:outer membrane-bounded periplasmic space"/>
    <property type="evidence" value="ECO:0007669"/>
    <property type="project" value="TreeGrafter"/>
</dbReference>
<dbReference type="GO" id="GO:0044874">
    <property type="term" value="P:lipoprotein localization to outer membrane"/>
    <property type="evidence" value="ECO:0007669"/>
    <property type="project" value="UniProtKB-UniRule"/>
</dbReference>
<dbReference type="GO" id="GO:0042953">
    <property type="term" value="P:lipoprotein transport"/>
    <property type="evidence" value="ECO:0007669"/>
    <property type="project" value="InterPro"/>
</dbReference>
<dbReference type="CDD" id="cd16325">
    <property type="entry name" value="LolA"/>
    <property type="match status" value="1"/>
</dbReference>
<dbReference type="Gene3D" id="2.50.20.10">
    <property type="entry name" value="Lipoprotein localisation LolA/LolB/LppX"/>
    <property type="match status" value="1"/>
</dbReference>
<dbReference type="HAMAP" id="MF_00240">
    <property type="entry name" value="LolA"/>
    <property type="match status" value="1"/>
</dbReference>
<dbReference type="InterPro" id="IPR029046">
    <property type="entry name" value="LolA/LolB/LppX"/>
</dbReference>
<dbReference type="InterPro" id="IPR004564">
    <property type="entry name" value="OM_lipoprot_carrier_LolA-like"/>
</dbReference>
<dbReference type="InterPro" id="IPR018323">
    <property type="entry name" value="OM_lipoprot_carrier_LolA_Pbac"/>
</dbReference>
<dbReference type="NCBIfam" id="TIGR00547">
    <property type="entry name" value="lolA"/>
    <property type="match status" value="1"/>
</dbReference>
<dbReference type="PANTHER" id="PTHR35869">
    <property type="entry name" value="OUTER-MEMBRANE LIPOPROTEIN CARRIER PROTEIN"/>
    <property type="match status" value="1"/>
</dbReference>
<dbReference type="PANTHER" id="PTHR35869:SF1">
    <property type="entry name" value="OUTER-MEMBRANE LIPOPROTEIN CARRIER PROTEIN"/>
    <property type="match status" value="1"/>
</dbReference>
<dbReference type="Pfam" id="PF03548">
    <property type="entry name" value="LolA"/>
    <property type="match status" value="1"/>
</dbReference>
<dbReference type="SUPFAM" id="SSF89392">
    <property type="entry name" value="Prokaryotic lipoproteins and lipoprotein localization factors"/>
    <property type="match status" value="1"/>
</dbReference>
<evidence type="ECO:0000255" key="1">
    <source>
        <dbReference type="HAMAP-Rule" id="MF_00240"/>
    </source>
</evidence>
<accession>B6ENN3</accession>
<keyword id="KW-0143">Chaperone</keyword>
<keyword id="KW-0574">Periplasm</keyword>
<keyword id="KW-0653">Protein transport</keyword>
<keyword id="KW-0732">Signal</keyword>
<keyword id="KW-0813">Transport</keyword>
<organism>
    <name type="scientific">Aliivibrio salmonicida (strain LFI1238)</name>
    <name type="common">Vibrio salmonicida (strain LFI1238)</name>
    <dbReference type="NCBI Taxonomy" id="316275"/>
    <lineage>
        <taxon>Bacteria</taxon>
        <taxon>Pseudomonadati</taxon>
        <taxon>Pseudomonadota</taxon>
        <taxon>Gammaproteobacteria</taxon>
        <taxon>Vibrionales</taxon>
        <taxon>Vibrionaceae</taxon>
        <taxon>Aliivibrio</taxon>
    </lineage>
</organism>
<proteinExistence type="inferred from homology"/>
<name>LOLA_ALISL</name>
<reference key="1">
    <citation type="journal article" date="2008" name="BMC Genomics">
        <title>The genome sequence of the fish pathogen Aliivibrio salmonicida strain LFI1238 shows extensive evidence of gene decay.</title>
        <authorList>
            <person name="Hjerde E."/>
            <person name="Lorentzen M.S."/>
            <person name="Holden M.T."/>
            <person name="Seeger K."/>
            <person name="Paulsen S."/>
            <person name="Bason N."/>
            <person name="Churcher C."/>
            <person name="Harris D."/>
            <person name="Norbertczak H."/>
            <person name="Quail M.A."/>
            <person name="Sanders S."/>
            <person name="Thurston S."/>
            <person name="Parkhill J."/>
            <person name="Willassen N.P."/>
            <person name="Thomson N.R."/>
        </authorList>
    </citation>
    <scope>NUCLEOTIDE SEQUENCE [LARGE SCALE GENOMIC DNA]</scope>
    <source>
        <strain>LFI1238</strain>
    </source>
</reference>